<accession>P34930</accession>
<organism>
    <name type="scientific">Sus scrofa</name>
    <name type="common">Pig</name>
    <dbReference type="NCBI Taxonomy" id="9823"/>
    <lineage>
        <taxon>Eukaryota</taxon>
        <taxon>Metazoa</taxon>
        <taxon>Chordata</taxon>
        <taxon>Craniata</taxon>
        <taxon>Vertebrata</taxon>
        <taxon>Euteleostomi</taxon>
        <taxon>Mammalia</taxon>
        <taxon>Eutheria</taxon>
        <taxon>Laurasiatheria</taxon>
        <taxon>Artiodactyla</taxon>
        <taxon>Suina</taxon>
        <taxon>Suidae</taxon>
        <taxon>Sus</taxon>
    </lineage>
</organism>
<name>HS71A_PIG</name>
<feature type="initiator methionine" description="Removed" evidence="2">
    <location>
        <position position="1"/>
    </location>
</feature>
<feature type="chain" id="PRO_0000078252" description="Heat shock 70 kDa protein 1A">
    <location>
        <begin position="2"/>
        <end position="641"/>
    </location>
</feature>
<feature type="region of interest" description="Nucleotide-binding domain (NBD)" evidence="4">
    <location>
        <begin position="2"/>
        <end position="386"/>
    </location>
</feature>
<feature type="region of interest" description="Substrate-binding domain (SBD)" evidence="4">
    <location>
        <begin position="394"/>
        <end position="509"/>
    </location>
</feature>
<feature type="region of interest" description="Disordered" evidence="6">
    <location>
        <begin position="614"/>
        <end position="641"/>
    </location>
</feature>
<feature type="compositionally biased region" description="Gly residues" evidence="6">
    <location>
        <begin position="614"/>
        <end position="633"/>
    </location>
</feature>
<feature type="binding site" evidence="1">
    <location>
        <begin position="12"/>
        <end position="15"/>
    </location>
    <ligand>
        <name>ATP</name>
        <dbReference type="ChEBI" id="CHEBI:30616"/>
    </ligand>
</feature>
<feature type="binding site" evidence="1">
    <location>
        <position position="71"/>
    </location>
    <ligand>
        <name>ATP</name>
        <dbReference type="ChEBI" id="CHEBI:30616"/>
    </ligand>
</feature>
<feature type="binding site" evidence="1">
    <location>
        <begin position="202"/>
        <end position="204"/>
    </location>
    <ligand>
        <name>ATP</name>
        <dbReference type="ChEBI" id="CHEBI:30616"/>
    </ligand>
</feature>
<feature type="binding site" evidence="1">
    <location>
        <begin position="268"/>
        <end position="275"/>
    </location>
    <ligand>
        <name>ATP</name>
        <dbReference type="ChEBI" id="CHEBI:30616"/>
    </ligand>
</feature>
<feature type="binding site" evidence="1">
    <location>
        <begin position="339"/>
        <end position="342"/>
    </location>
    <ligand>
        <name>ATP</name>
        <dbReference type="ChEBI" id="CHEBI:30616"/>
    </ligand>
</feature>
<feature type="modified residue" description="N-acetylalanine" evidence="2">
    <location>
        <position position="2"/>
    </location>
</feature>
<feature type="modified residue" description="N6-acetyllysine" evidence="2">
    <location>
        <position position="77"/>
    </location>
</feature>
<feature type="modified residue" description="N6-acetyllysine" evidence="2">
    <location>
        <position position="108"/>
    </location>
</feature>
<feature type="modified residue" description="N6-acetyllysine" evidence="2">
    <location>
        <position position="246"/>
    </location>
</feature>
<feature type="modified residue" description="N6-acetyllysine" evidence="2">
    <location>
        <position position="348"/>
    </location>
</feature>
<feature type="modified residue" description="Omega-N-methylarginine" evidence="2">
    <location>
        <position position="469"/>
    </location>
</feature>
<feature type="modified residue" description="N6,N6,N6-trimethyllysine; by METTL21A; alternate" evidence="2">
    <location>
        <position position="561"/>
    </location>
</feature>
<feature type="modified residue" description="N6,N6-dimethyllysine; alternate" evidence="2">
    <location>
        <position position="561"/>
    </location>
</feature>
<feature type="modified residue" description="Phosphoserine" evidence="2">
    <location>
        <position position="631"/>
    </location>
</feature>
<feature type="modified residue" description="Phosphoserine" evidence="2">
    <location>
        <position position="633"/>
    </location>
</feature>
<feature type="modified residue" description="Phosphothreonine" evidence="2">
    <location>
        <position position="636"/>
    </location>
</feature>
<sequence>MAKSVAIGIDLGTTYSCVGVFQHGKVEIIANDQGNRTTPSSVAFTDTERLIGDAAKNQVALNPQNTVFDAKRLIGRKFGDPVVQGDMKHWPFRVINDGDKPKVQVSYKGETKGFYPEEISSMVLTKMKEIAEGYLGHPVSNAVITVPAYFNDSQRQATKDAGVIAGLNVLRIINEPTAAAIAYGLDRTGKGERNVLIFDLGGGTFDVSILTIDDGIFEVKATAGDTHLGGEDFDNRLVNHFVEEFKRKHKKDYSQNKRAVRRLRTACERAKRTLSSSTQASLEIDSLFEGIDFYTSITRARFEELCSDLFRSTLEPVEKALRDAKLDKAQIHDLVLVGGSTRIPKVQKLLQDFFNGRDLNKSINPDEAVAYGAAVQAAILMGDKSENVQDLLLLDVAPLSLGLETAGGVMTALIKRNSTIPTKQTQIFTTYSDNQPGVLIQVYEGERAMTRDNNLLGRFELSGIPPAPRGVPQIEVTFDIDANGILNVTATDKSTGKANKITITNDKGRLSKEEIERMVQEAEKYKAEDEIQRERVGAKNALESYAFNMKSVVEDEGLKGKISEADKKKVLDKCQEVISWLDANTLAEKDEFEHKRKELEQVCNPIISGLYQGAGGPGPGGFGAPDLKGGSGSGPTIEEVD</sequence>
<evidence type="ECO:0000250" key="1"/>
<evidence type="ECO:0000250" key="2">
    <source>
        <dbReference type="UniProtKB" id="P0DMV8"/>
    </source>
</evidence>
<evidence type="ECO:0000250" key="3">
    <source>
        <dbReference type="UniProtKB" id="P0DMW0"/>
    </source>
</evidence>
<evidence type="ECO:0000250" key="4">
    <source>
        <dbReference type="UniProtKB" id="P11142"/>
    </source>
</evidence>
<evidence type="ECO:0000250" key="5">
    <source>
        <dbReference type="UniProtKB" id="Q61696"/>
    </source>
</evidence>
<evidence type="ECO:0000256" key="6">
    <source>
        <dbReference type="SAM" id="MobiDB-lite"/>
    </source>
</evidence>
<evidence type="ECO:0000305" key="7"/>
<proteinExistence type="inferred from homology"/>
<reference key="1">
    <citation type="journal article" date="1992" name="Immunogenetics">
        <title>Complete nucleotide sequence of a porcine HSP70 gene.</title>
        <authorList>
            <person name="Peelman L.J."/>
            <person name="de Weghe A.R."/>
            <person name="Coppieters W.R."/>
            <person name="van Zeveren A.J."/>
            <person name="Bouquet Y.H."/>
        </authorList>
    </citation>
    <scope>NUCLEOTIDE SEQUENCE [GENOMIC DNA]</scope>
</reference>
<comment type="function">
    <text evidence="2 3">Molecular chaperone implicated in a wide variety of cellular processes, including protection of the proteome from stress, folding and transport of newly synthesized polypeptides, activation of proteolysis of misfolded proteins and the formation and dissociation of protein complexes. Plays a pivotal role in the protein quality control system, ensuring the correct folding of proteins, the re-folding of misfolded proteins and controlling the targeting of proteins for subsequent degradation. This is achieved through cycles of ATP binding, ATP hydrolysis and ADP release, mediated by co-chaperones. The co-chaperones have been shown to not only regulate different steps of the ATPase cycle, but they also have an individual specificity such that one co-chaperone may promote folding of a substrate while another may promote degradation. The affinity for polypeptides is regulated by its nucleotide bound state. In the ATP-bound form, it has a low affinity for substrate proteins. However, upon hydrolysis of the ATP to ADP, it undergoes a conformational change that increases its affinity for substrate proteins. It goes through repeated cycles of ATP hydrolysis and nucleotide exchange, which permits cycles of substrate binding and release. The co-chaperones are of three types: J-domain co-chaperones such as HSP40s (stimulate ATPase hydrolysis by HSP70), the nucleotide exchange factors (NEF) such as BAG1/2/3 (facilitate conversion of HSP70 from the ADP-bound to the ATP-bound state thereby promoting substrate release), and the TPR domain chaperones such as HOPX and STUB1. Maintains protein homeostasis during cellular stress through two opposing mechanisms: protein refolding and degradation. Its acetylation/deacetylation state determines whether it functions in protein refolding or protein degradation by controlling the competitive binding of co-chaperones HOPX and STUB1. During the early stress response, the acetylated form binds to HOPX which assists in chaperone-mediated protein refolding, thereafter, it is deacetylated and binds to ubiquitin ligase STUB1 that promotes ubiquitin-mediated protein degradation. Regulates centrosome integrity during mitosis, and is required for the maintenance of a functional mitotic centrosome that supports the assembly of a bipolar mitotic spindle. Enhances STUB1-mediated SMAD3 ubiquitination and degradation and facilitates STUB1-mediated inhibition of TGF-beta signaling. Essential for STUB1-mediated ubiquitination and degradation of FOXP3 in regulatory T-cells (Treg) during inflammation. Required as a co-chaperone for optimal STUB1/CHIP ubiquitination of NFATC3 (By similarity). Negatively regulates heat shock-induced HSF1 transcriptional activity during the attenuation and recovery phase period of the heat shock response.</text>
</comment>
<comment type="subunit">
    <text evidence="2 3 5">Component of the CatSper complex. Identified in a IGF2BP1-dependent mRNP granule complex containing untranslated mRNAs. Identified in a IGF2BP1-dependent mRNP granule complex containing untranslated mRNAs. Interacts with CHCHD3, DNAJC7, IRAK1BP1, PPP5C and TSC2. Interacts with TERT; the interaction occurs in the absence of the RNA component, TERC, and dissociates once the TERT complex has formed. Interacts with TRIM5 (via B30.2/SPRY domain). Interacts with METTL21A. Interacts with DNAAF2. Interacts with PRKN. Interacts with FOXP3. Interacts with NOD2; the interaction enhances NOD2 stability. Interacts with DNAJC9 (via J domain). Interacts with ATF5; the interaction protects ATF5 from degradation via proteasome-dependent and caspase-dependent processes. Interacts with RNF207 (via the C-terminus); this interaction additively increases KCNH2 expression. Interacts with HSF1 (via transactivation domain); this interaction results in the inhibition of heat shock- and HSF1-induced transcriptional activity during the attenuation and recovery phase period of the heat shock response. Interacts with NAA10, HSP40, HSP90 and HDAC4. Interacts (via C-terminus) with STUB1 (via TPR repeats) (By similarity). The acetylated form and the non-acetylated form interact with HOPX and STUB1 respectively. Interacts with NEDD1 and SMAD3. Interacts (via NBD) with BAG1, BAG2, BAG3 and HSPH1/HSP105. Interacts with DNAJC8. Interacts with NLRP12. Interacts with PGLYRP. Forms a ternary complex with BAG3 and HSPB8 (By similarity).</text>
</comment>
<comment type="subcellular location">
    <subcellularLocation>
        <location evidence="2">Cytoplasm</location>
    </subcellularLocation>
    <subcellularLocation>
        <location evidence="2">Nucleus</location>
    </subcellularLocation>
    <subcellularLocation>
        <location evidence="2">Cytoplasm</location>
        <location evidence="2">Cytoskeleton</location>
        <location evidence="2">Microtubule organizing center</location>
        <location evidence="2">Centrosome</location>
    </subcellularLocation>
    <subcellularLocation>
        <location evidence="5">Secreted</location>
    </subcellularLocation>
    <text evidence="2">Localized in cytoplasmic mRNP granules containing untranslated mRNAs.</text>
</comment>
<comment type="domain">
    <text evidence="2">The N-terminal nucleotide binding domain (NBD) (also known as the ATPase domain) is responsible for binding and hydrolyzing ATP. The C-terminal substrate-binding domain (SBD) (also known as peptide-binding domain) binds to the client/substrate proteins. The two domains are allosterically coupled so that, when ATP is bound to the NBD, the SBD binds relatively weakly to clients. When ADP is bound in the NBD, a conformational change enhances the affinity of the SBD for client proteins.</text>
</comment>
<comment type="PTM">
    <text evidence="2">In response to cellular stress, acetylated at Lys-77 by NA110 and then gradually deacetylated by HDAC4 at later stages. Acetylation enhances its chaperone activity and also determines whether it will function as a chaperone for protein refolding or degradation by controlling its binding to co-chaperones HOPX and STUB1. The acetylated form and the non-acetylated form bind to HOPX and STUB1 respectively. Acetylation also protects cells against various types of cellular stress.</text>
</comment>
<comment type="similarity">
    <text evidence="7">Belongs to the heat shock protein 70 family.</text>
</comment>
<keyword id="KW-0007">Acetylation</keyword>
<keyword id="KW-0067">ATP-binding</keyword>
<keyword id="KW-0143">Chaperone</keyword>
<keyword id="KW-0963">Cytoplasm</keyword>
<keyword id="KW-0206">Cytoskeleton</keyword>
<keyword id="KW-0488">Methylation</keyword>
<keyword id="KW-0547">Nucleotide-binding</keyword>
<keyword id="KW-0539">Nucleus</keyword>
<keyword id="KW-0597">Phosphoprotein</keyword>
<keyword id="KW-1185">Reference proteome</keyword>
<keyword id="KW-0964">Secreted</keyword>
<keyword id="KW-0346">Stress response</keyword>
<dbReference type="EMBL" id="M69100">
    <property type="status" value="NOT_ANNOTATED_CDS"/>
    <property type="molecule type" value="Genomic_DNA"/>
</dbReference>
<dbReference type="PIR" id="S35718">
    <property type="entry name" value="S35718"/>
</dbReference>
<dbReference type="BMRB" id="P34930"/>
<dbReference type="SMR" id="P34930"/>
<dbReference type="CORUM" id="P34930"/>
<dbReference type="FunCoup" id="P34930">
    <property type="interactions" value="143"/>
</dbReference>
<dbReference type="IntAct" id="P34930">
    <property type="interactions" value="2"/>
</dbReference>
<dbReference type="MINT" id="P34930"/>
<dbReference type="GlyGen" id="P34930">
    <property type="glycosylation" value="1 site"/>
</dbReference>
<dbReference type="PeptideAtlas" id="P34930"/>
<dbReference type="InParanoid" id="P34930"/>
<dbReference type="PRO" id="PR:P34930"/>
<dbReference type="Proteomes" id="UP000008227">
    <property type="component" value="Unplaced"/>
</dbReference>
<dbReference type="Proteomes" id="UP000314985">
    <property type="component" value="Unplaced"/>
</dbReference>
<dbReference type="Proteomes" id="UP000694570">
    <property type="component" value="Unplaced"/>
</dbReference>
<dbReference type="Proteomes" id="UP000694571">
    <property type="component" value="Unplaced"/>
</dbReference>
<dbReference type="Proteomes" id="UP000694720">
    <property type="component" value="Unplaced"/>
</dbReference>
<dbReference type="Proteomes" id="UP000694722">
    <property type="component" value="Unplaced"/>
</dbReference>
<dbReference type="Proteomes" id="UP000694723">
    <property type="component" value="Unplaced"/>
</dbReference>
<dbReference type="Proteomes" id="UP000694724">
    <property type="component" value="Unplaced"/>
</dbReference>
<dbReference type="Proteomes" id="UP000694725">
    <property type="component" value="Unplaced"/>
</dbReference>
<dbReference type="Proteomes" id="UP000694726">
    <property type="component" value="Unplaced"/>
</dbReference>
<dbReference type="Proteomes" id="UP000694727">
    <property type="component" value="Unplaced"/>
</dbReference>
<dbReference type="Proteomes" id="UP000694728">
    <property type="component" value="Unplaced"/>
</dbReference>
<dbReference type="GO" id="GO:0005813">
    <property type="term" value="C:centrosome"/>
    <property type="evidence" value="ECO:0000250"/>
    <property type="project" value="UniProtKB"/>
</dbReference>
<dbReference type="GO" id="GO:0005737">
    <property type="term" value="C:cytoplasm"/>
    <property type="evidence" value="ECO:0000318"/>
    <property type="project" value="GO_Central"/>
</dbReference>
<dbReference type="GO" id="GO:0005829">
    <property type="term" value="C:cytosol"/>
    <property type="evidence" value="ECO:0000318"/>
    <property type="project" value="GO_Central"/>
</dbReference>
<dbReference type="GO" id="GO:0005576">
    <property type="term" value="C:extracellular region"/>
    <property type="evidence" value="ECO:0007669"/>
    <property type="project" value="UniProtKB-SubCell"/>
</dbReference>
<dbReference type="GO" id="GO:0005634">
    <property type="term" value="C:nucleus"/>
    <property type="evidence" value="ECO:0000318"/>
    <property type="project" value="GO_Central"/>
</dbReference>
<dbReference type="GO" id="GO:0005886">
    <property type="term" value="C:plasma membrane"/>
    <property type="evidence" value="ECO:0000318"/>
    <property type="project" value="GO_Central"/>
</dbReference>
<dbReference type="GO" id="GO:0005524">
    <property type="term" value="F:ATP binding"/>
    <property type="evidence" value="ECO:0007669"/>
    <property type="project" value="UniProtKB-KW"/>
</dbReference>
<dbReference type="GO" id="GO:0016887">
    <property type="term" value="F:ATP hydrolysis activity"/>
    <property type="evidence" value="ECO:0000318"/>
    <property type="project" value="GO_Central"/>
</dbReference>
<dbReference type="GO" id="GO:0140662">
    <property type="term" value="F:ATP-dependent protein folding chaperone"/>
    <property type="evidence" value="ECO:0007669"/>
    <property type="project" value="InterPro"/>
</dbReference>
<dbReference type="GO" id="GO:0031072">
    <property type="term" value="F:heat shock protein binding"/>
    <property type="evidence" value="ECO:0000318"/>
    <property type="project" value="GO_Central"/>
</dbReference>
<dbReference type="GO" id="GO:0044183">
    <property type="term" value="F:protein folding chaperone"/>
    <property type="evidence" value="ECO:0000318"/>
    <property type="project" value="GO_Central"/>
</dbReference>
<dbReference type="GO" id="GO:0003714">
    <property type="term" value="F:transcription corepressor activity"/>
    <property type="evidence" value="ECO:0000250"/>
    <property type="project" value="UniProtKB"/>
</dbReference>
<dbReference type="GO" id="GO:0051085">
    <property type="term" value="P:chaperone cofactor-dependent protein refolding"/>
    <property type="evidence" value="ECO:0000318"/>
    <property type="project" value="GO_Central"/>
</dbReference>
<dbReference type="GO" id="GO:0007041">
    <property type="term" value="P:lysosomal transport"/>
    <property type="evidence" value="ECO:0000250"/>
    <property type="project" value="UniProtKB"/>
</dbReference>
<dbReference type="GO" id="GO:0000122">
    <property type="term" value="P:negative regulation of transcription by RNA polymerase II"/>
    <property type="evidence" value="ECO:0000250"/>
    <property type="project" value="UniProtKB"/>
</dbReference>
<dbReference type="GO" id="GO:0090063">
    <property type="term" value="P:positive regulation of microtubule nucleation"/>
    <property type="evidence" value="ECO:0000250"/>
    <property type="project" value="UniProtKB"/>
</dbReference>
<dbReference type="GO" id="GO:0032436">
    <property type="term" value="P:positive regulation of proteasomal ubiquitin-dependent protein catabolic process"/>
    <property type="evidence" value="ECO:0000318"/>
    <property type="project" value="GO_Central"/>
</dbReference>
<dbReference type="GO" id="GO:0042026">
    <property type="term" value="P:protein refolding"/>
    <property type="evidence" value="ECO:0000250"/>
    <property type="project" value="UniProtKB"/>
</dbReference>
<dbReference type="GO" id="GO:1901673">
    <property type="term" value="P:regulation of mitotic spindle assembly"/>
    <property type="evidence" value="ECO:0000250"/>
    <property type="project" value="UniProtKB"/>
</dbReference>
<dbReference type="CDD" id="cd10233">
    <property type="entry name" value="ASKHA_NBD_HSP70_HSPA1"/>
    <property type="match status" value="1"/>
</dbReference>
<dbReference type="FunFam" id="2.60.34.10:FF:000002">
    <property type="entry name" value="Heat shock 70 kDa"/>
    <property type="match status" value="1"/>
</dbReference>
<dbReference type="FunFam" id="3.30.420.40:FF:000172">
    <property type="entry name" value="Heat shock 70 kDa protein"/>
    <property type="match status" value="1"/>
</dbReference>
<dbReference type="FunFam" id="1.20.1270.10:FF:000010">
    <property type="entry name" value="Heat shock 70 kDa protein 2"/>
    <property type="match status" value="1"/>
</dbReference>
<dbReference type="FunFam" id="3.30.30.30:FF:000001">
    <property type="entry name" value="heat shock 70 kDa protein-like"/>
    <property type="match status" value="1"/>
</dbReference>
<dbReference type="FunFam" id="3.30.420.40:FF:000028">
    <property type="entry name" value="heat shock 70 kDa protein-like"/>
    <property type="match status" value="1"/>
</dbReference>
<dbReference type="FunFam" id="3.30.420.40:FF:000135">
    <property type="entry name" value="Heat shock cognate 71 kDa protein"/>
    <property type="match status" value="1"/>
</dbReference>
<dbReference type="FunFam" id="3.90.640.10:FF:000134">
    <property type="entry name" value="Heat shock cognate 71 kDa protein"/>
    <property type="match status" value="1"/>
</dbReference>
<dbReference type="FunFam" id="3.30.420.40:FF:000026">
    <property type="entry name" value="Heat shock protein 70"/>
    <property type="match status" value="1"/>
</dbReference>
<dbReference type="Gene3D" id="1.20.1270.10">
    <property type="match status" value="1"/>
</dbReference>
<dbReference type="Gene3D" id="3.30.30.30">
    <property type="match status" value="1"/>
</dbReference>
<dbReference type="Gene3D" id="3.30.420.40">
    <property type="match status" value="2"/>
</dbReference>
<dbReference type="Gene3D" id="3.90.640.10">
    <property type="entry name" value="Actin, Chain A, domain 4"/>
    <property type="match status" value="1"/>
</dbReference>
<dbReference type="Gene3D" id="2.60.34.10">
    <property type="entry name" value="Substrate Binding Domain Of DNAk, Chain A, domain 1"/>
    <property type="match status" value="1"/>
</dbReference>
<dbReference type="InterPro" id="IPR043129">
    <property type="entry name" value="ATPase_NBD"/>
</dbReference>
<dbReference type="InterPro" id="IPR018181">
    <property type="entry name" value="Heat_shock_70_CS"/>
</dbReference>
<dbReference type="InterPro" id="IPR029048">
    <property type="entry name" value="HSP70_C_sf"/>
</dbReference>
<dbReference type="InterPro" id="IPR029047">
    <property type="entry name" value="HSP70_peptide-bd_sf"/>
</dbReference>
<dbReference type="InterPro" id="IPR013126">
    <property type="entry name" value="Hsp_70_fam"/>
</dbReference>
<dbReference type="NCBIfam" id="NF001413">
    <property type="entry name" value="PRK00290.1"/>
    <property type="match status" value="1"/>
</dbReference>
<dbReference type="PANTHER" id="PTHR19375">
    <property type="entry name" value="HEAT SHOCK PROTEIN 70KDA"/>
    <property type="match status" value="1"/>
</dbReference>
<dbReference type="Pfam" id="PF00012">
    <property type="entry name" value="HSP70"/>
    <property type="match status" value="1"/>
</dbReference>
<dbReference type="PRINTS" id="PR00301">
    <property type="entry name" value="HEATSHOCK70"/>
</dbReference>
<dbReference type="SUPFAM" id="SSF53067">
    <property type="entry name" value="Actin-like ATPase domain"/>
    <property type="match status" value="2"/>
</dbReference>
<dbReference type="SUPFAM" id="SSF100934">
    <property type="entry name" value="Heat shock protein 70kD (HSP70), C-terminal subdomain"/>
    <property type="match status" value="1"/>
</dbReference>
<dbReference type="SUPFAM" id="SSF100920">
    <property type="entry name" value="Heat shock protein 70kD (HSP70), peptide-binding domain"/>
    <property type="match status" value="1"/>
</dbReference>
<dbReference type="PROSITE" id="PS00297">
    <property type="entry name" value="HSP70_1"/>
    <property type="match status" value="1"/>
</dbReference>
<dbReference type="PROSITE" id="PS00329">
    <property type="entry name" value="HSP70_2"/>
    <property type="match status" value="1"/>
</dbReference>
<dbReference type="PROSITE" id="PS01036">
    <property type="entry name" value="HSP70_3"/>
    <property type="match status" value="1"/>
</dbReference>
<gene>
    <name type="primary">HSPA1A</name>
    <name type="synonym">HSPA1</name>
</gene>
<protein>
    <recommendedName>
        <fullName>Heat shock 70 kDa protein 1A</fullName>
    </recommendedName>
    <alternativeName>
        <fullName>Heat shock 70 kDa protein 1</fullName>
        <shortName>HSP70.1</shortName>
    </alternativeName>
</protein>